<reference key="1">
    <citation type="journal article" date="2001" name="Genome Res.">
        <title>The complete genome sequence of the lactic acid bacterium Lactococcus lactis ssp. lactis IL1403.</title>
        <authorList>
            <person name="Bolotin A."/>
            <person name="Wincker P."/>
            <person name="Mauger S."/>
            <person name="Jaillon O."/>
            <person name="Malarme K."/>
            <person name="Weissenbach J."/>
            <person name="Ehrlich S.D."/>
            <person name="Sorokin A."/>
        </authorList>
    </citation>
    <scope>NUCLEOTIDE SEQUENCE [LARGE SCALE GENOMIC DNA]</scope>
    <source>
        <strain>IL1403</strain>
    </source>
</reference>
<feature type="chain" id="PRO_0000178179" description="dITP/XTP pyrophosphatase">
    <location>
        <begin position="1"/>
        <end position="201"/>
    </location>
</feature>
<feature type="active site" description="Proton acceptor" evidence="1">
    <location>
        <position position="71"/>
    </location>
</feature>
<feature type="binding site" evidence="1">
    <location>
        <begin position="9"/>
        <end position="14"/>
    </location>
    <ligand>
        <name>substrate</name>
    </ligand>
</feature>
<feature type="binding site" evidence="1">
    <location>
        <position position="42"/>
    </location>
    <ligand>
        <name>Mg(2+)</name>
        <dbReference type="ChEBI" id="CHEBI:18420"/>
    </ligand>
</feature>
<feature type="binding site" evidence="1">
    <location>
        <position position="71"/>
    </location>
    <ligand>
        <name>Mg(2+)</name>
        <dbReference type="ChEBI" id="CHEBI:18420"/>
    </ligand>
</feature>
<feature type="binding site" evidence="1">
    <location>
        <position position="72"/>
    </location>
    <ligand>
        <name>substrate</name>
    </ligand>
</feature>
<feature type="binding site" evidence="1">
    <location>
        <begin position="156"/>
        <end position="159"/>
    </location>
    <ligand>
        <name>substrate</name>
    </ligand>
</feature>
<feature type="binding site" evidence="1">
    <location>
        <position position="178"/>
    </location>
    <ligand>
        <name>substrate</name>
    </ligand>
</feature>
<feature type="binding site" evidence="1">
    <location>
        <begin position="183"/>
        <end position="184"/>
    </location>
    <ligand>
        <name>substrate</name>
    </ligand>
</feature>
<gene>
    <name type="primary">ynbD</name>
    <name type="ordered locus">LL1281</name>
    <name type="ORF">L111484</name>
</gene>
<name>IXTPA_LACLA</name>
<accession>Q9CG29</accession>
<proteinExistence type="inferred from homology"/>
<organism>
    <name type="scientific">Lactococcus lactis subsp. lactis (strain IL1403)</name>
    <name type="common">Streptococcus lactis</name>
    <dbReference type="NCBI Taxonomy" id="272623"/>
    <lineage>
        <taxon>Bacteria</taxon>
        <taxon>Bacillati</taxon>
        <taxon>Bacillota</taxon>
        <taxon>Bacilli</taxon>
        <taxon>Lactobacillales</taxon>
        <taxon>Streptococcaceae</taxon>
        <taxon>Lactococcus</taxon>
    </lineage>
</organism>
<protein>
    <recommendedName>
        <fullName evidence="1">dITP/XTP pyrophosphatase</fullName>
        <ecNumber evidence="1">3.6.1.66</ecNumber>
    </recommendedName>
    <alternativeName>
        <fullName evidence="1">Non-canonical purine NTP pyrophosphatase</fullName>
    </alternativeName>
    <alternativeName>
        <fullName evidence="1">Non-standard purine NTP pyrophosphatase</fullName>
    </alternativeName>
    <alternativeName>
        <fullName evidence="1">Nucleoside-triphosphate diphosphatase</fullName>
    </alternativeName>
    <alternativeName>
        <fullName evidence="1">Nucleoside-triphosphate pyrophosphatase</fullName>
        <shortName evidence="1">NTPase</shortName>
    </alternativeName>
</protein>
<comment type="function">
    <text evidence="1">Pyrophosphatase that catalyzes the hydrolysis of nucleoside triphosphates to their monophosphate derivatives, with a high preference for the non-canonical purine nucleotides XTP (xanthosine triphosphate), dITP (deoxyinosine triphosphate) and ITP. Seems to function as a house-cleaning enzyme that removes non-canonical purine nucleotides from the nucleotide pool, thus preventing their incorporation into DNA/RNA and avoiding chromosomal lesions.</text>
</comment>
<comment type="catalytic activity">
    <reaction evidence="1">
        <text>XTP + H2O = XMP + diphosphate + H(+)</text>
        <dbReference type="Rhea" id="RHEA:28610"/>
        <dbReference type="ChEBI" id="CHEBI:15377"/>
        <dbReference type="ChEBI" id="CHEBI:15378"/>
        <dbReference type="ChEBI" id="CHEBI:33019"/>
        <dbReference type="ChEBI" id="CHEBI:57464"/>
        <dbReference type="ChEBI" id="CHEBI:61314"/>
        <dbReference type="EC" id="3.6.1.66"/>
    </reaction>
</comment>
<comment type="catalytic activity">
    <reaction evidence="1">
        <text>dITP + H2O = dIMP + diphosphate + H(+)</text>
        <dbReference type="Rhea" id="RHEA:28342"/>
        <dbReference type="ChEBI" id="CHEBI:15377"/>
        <dbReference type="ChEBI" id="CHEBI:15378"/>
        <dbReference type="ChEBI" id="CHEBI:33019"/>
        <dbReference type="ChEBI" id="CHEBI:61194"/>
        <dbReference type="ChEBI" id="CHEBI:61382"/>
        <dbReference type="EC" id="3.6.1.66"/>
    </reaction>
</comment>
<comment type="catalytic activity">
    <reaction evidence="1">
        <text>ITP + H2O = IMP + diphosphate + H(+)</text>
        <dbReference type="Rhea" id="RHEA:29399"/>
        <dbReference type="ChEBI" id="CHEBI:15377"/>
        <dbReference type="ChEBI" id="CHEBI:15378"/>
        <dbReference type="ChEBI" id="CHEBI:33019"/>
        <dbReference type="ChEBI" id="CHEBI:58053"/>
        <dbReference type="ChEBI" id="CHEBI:61402"/>
        <dbReference type="EC" id="3.6.1.66"/>
    </reaction>
</comment>
<comment type="cofactor">
    <cofactor evidence="1">
        <name>Mg(2+)</name>
        <dbReference type="ChEBI" id="CHEBI:18420"/>
    </cofactor>
    <text evidence="1">Binds 1 Mg(2+) ion per subunit.</text>
</comment>
<comment type="subunit">
    <text evidence="1">Homodimer.</text>
</comment>
<comment type="similarity">
    <text evidence="1">Belongs to the HAM1 NTPase family.</text>
</comment>
<dbReference type="EC" id="3.6.1.66" evidence="1"/>
<dbReference type="EMBL" id="AE005176">
    <property type="protein sequence ID" value="AAK05379.1"/>
    <property type="molecule type" value="Genomic_DNA"/>
</dbReference>
<dbReference type="PIR" id="A86785">
    <property type="entry name" value="A86785"/>
</dbReference>
<dbReference type="SMR" id="Q9CG29"/>
<dbReference type="PaxDb" id="272623-L111484"/>
<dbReference type="EnsemblBacteria" id="AAK05379">
    <property type="protein sequence ID" value="AAK05379"/>
    <property type="gene ID" value="L111484"/>
</dbReference>
<dbReference type="KEGG" id="lla:L111484"/>
<dbReference type="eggNOG" id="COG0127">
    <property type="taxonomic scope" value="Bacteria"/>
</dbReference>
<dbReference type="HOGENOM" id="CLU_082080_0_1_9"/>
<dbReference type="Proteomes" id="UP000002196">
    <property type="component" value="Chromosome"/>
</dbReference>
<dbReference type="GO" id="GO:0005829">
    <property type="term" value="C:cytosol"/>
    <property type="evidence" value="ECO:0007669"/>
    <property type="project" value="TreeGrafter"/>
</dbReference>
<dbReference type="GO" id="GO:0035870">
    <property type="term" value="F:dITP diphosphatase activity"/>
    <property type="evidence" value="ECO:0007669"/>
    <property type="project" value="RHEA"/>
</dbReference>
<dbReference type="GO" id="GO:0036220">
    <property type="term" value="F:ITP diphosphatase activity"/>
    <property type="evidence" value="ECO:0007669"/>
    <property type="project" value="UniProtKB-EC"/>
</dbReference>
<dbReference type="GO" id="GO:0046872">
    <property type="term" value="F:metal ion binding"/>
    <property type="evidence" value="ECO:0007669"/>
    <property type="project" value="UniProtKB-KW"/>
</dbReference>
<dbReference type="GO" id="GO:0000166">
    <property type="term" value="F:nucleotide binding"/>
    <property type="evidence" value="ECO:0007669"/>
    <property type="project" value="UniProtKB-KW"/>
</dbReference>
<dbReference type="GO" id="GO:0017111">
    <property type="term" value="F:ribonucleoside triphosphate phosphatase activity"/>
    <property type="evidence" value="ECO:0007669"/>
    <property type="project" value="InterPro"/>
</dbReference>
<dbReference type="GO" id="GO:0036222">
    <property type="term" value="F:XTP diphosphatase activity"/>
    <property type="evidence" value="ECO:0007669"/>
    <property type="project" value="RHEA"/>
</dbReference>
<dbReference type="GO" id="GO:0009117">
    <property type="term" value="P:nucleotide metabolic process"/>
    <property type="evidence" value="ECO:0007669"/>
    <property type="project" value="UniProtKB-KW"/>
</dbReference>
<dbReference type="GO" id="GO:0009146">
    <property type="term" value="P:purine nucleoside triphosphate catabolic process"/>
    <property type="evidence" value="ECO:0007669"/>
    <property type="project" value="UniProtKB-UniRule"/>
</dbReference>
<dbReference type="CDD" id="cd00515">
    <property type="entry name" value="HAM1"/>
    <property type="match status" value="1"/>
</dbReference>
<dbReference type="FunFam" id="3.90.950.10:FF:000001">
    <property type="entry name" value="dITP/XTP pyrophosphatase"/>
    <property type="match status" value="1"/>
</dbReference>
<dbReference type="Gene3D" id="3.90.950.10">
    <property type="match status" value="1"/>
</dbReference>
<dbReference type="HAMAP" id="MF_01405">
    <property type="entry name" value="Non_canon_purine_NTPase"/>
    <property type="match status" value="1"/>
</dbReference>
<dbReference type="InterPro" id="IPR020922">
    <property type="entry name" value="dITP/XTP_pyrophosphatase"/>
</dbReference>
<dbReference type="InterPro" id="IPR029001">
    <property type="entry name" value="ITPase-like_fam"/>
</dbReference>
<dbReference type="InterPro" id="IPR002637">
    <property type="entry name" value="RdgB/HAM1"/>
</dbReference>
<dbReference type="NCBIfam" id="NF002698">
    <property type="entry name" value="PRK02491.1"/>
    <property type="match status" value="1"/>
</dbReference>
<dbReference type="NCBIfam" id="NF011397">
    <property type="entry name" value="PRK14822.1"/>
    <property type="match status" value="1"/>
</dbReference>
<dbReference type="NCBIfam" id="TIGR00042">
    <property type="entry name" value="RdgB/HAM1 family non-canonical purine NTP pyrophosphatase"/>
    <property type="match status" value="1"/>
</dbReference>
<dbReference type="PANTHER" id="PTHR11067:SF9">
    <property type="entry name" value="INOSINE TRIPHOSPHATE PYROPHOSPHATASE"/>
    <property type="match status" value="1"/>
</dbReference>
<dbReference type="PANTHER" id="PTHR11067">
    <property type="entry name" value="INOSINE TRIPHOSPHATE PYROPHOSPHATASE/HAM1 PROTEIN"/>
    <property type="match status" value="1"/>
</dbReference>
<dbReference type="Pfam" id="PF01725">
    <property type="entry name" value="Ham1p_like"/>
    <property type="match status" value="1"/>
</dbReference>
<dbReference type="SUPFAM" id="SSF52972">
    <property type="entry name" value="ITPase-like"/>
    <property type="match status" value="1"/>
</dbReference>
<evidence type="ECO:0000255" key="1">
    <source>
        <dbReference type="HAMAP-Rule" id="MF_01405"/>
    </source>
</evidence>
<sequence length="201" mass="22380">MEKTLIIATRNSGKTKEFKKLFADFGYEIKDLTDYPELSEIEETGTTFEENARLKAEQIAEITGQVVIGDDSGLCVDVLGGLPGIWSHRFSAPDPTDEKNIAKLLHELAPTAITPERRSAHFHTTLVAAKPGRESLVVEADWDGYIALAPKGENGFGYDPIFMVDAFRTAAELSEKEKNQVSHRGQALRKLMAELPEWLYK</sequence>
<keyword id="KW-0378">Hydrolase</keyword>
<keyword id="KW-0460">Magnesium</keyword>
<keyword id="KW-0479">Metal-binding</keyword>
<keyword id="KW-0546">Nucleotide metabolism</keyword>
<keyword id="KW-0547">Nucleotide-binding</keyword>
<keyword id="KW-1185">Reference proteome</keyword>